<organism>
    <name type="scientific">Sulfurihydrogenibium sp. (strain YO3AOP1)</name>
    <dbReference type="NCBI Taxonomy" id="436114"/>
    <lineage>
        <taxon>Bacteria</taxon>
        <taxon>Pseudomonadati</taxon>
        <taxon>Aquificota</taxon>
        <taxon>Aquificia</taxon>
        <taxon>Aquificales</taxon>
        <taxon>Hydrogenothermaceae</taxon>
        <taxon>Sulfurihydrogenibium</taxon>
    </lineage>
</organism>
<protein>
    <recommendedName>
        <fullName evidence="1">Ribosome maturation factor RimM</fullName>
    </recommendedName>
</protein>
<sequence>MKKDLIAIGKIHGTHGVKGNLKFEIFVKNFYLPEEIYIKDEENELQPLNIETVDRKKGLIKFKNYDTPEKAKEISHRLIYVPEDLLPKLGEDEFYEFQLIGMDVYYNDKLIGKVEKIDDRLSQAYLIIKCTDEKTRHLPFINEFVKDVNVKENKMQITPPEGWFSL</sequence>
<proteinExistence type="inferred from homology"/>
<reference key="1">
    <citation type="journal article" date="2009" name="J. Bacteriol.">
        <title>Complete and draft genome sequences of six members of the Aquificales.</title>
        <authorList>
            <person name="Reysenbach A.-L."/>
            <person name="Hamamura N."/>
            <person name="Podar M."/>
            <person name="Griffiths E."/>
            <person name="Ferreira S."/>
            <person name="Hochstein R."/>
            <person name="Heidelberg J."/>
            <person name="Johnson J."/>
            <person name="Mead D."/>
            <person name="Pohorille A."/>
            <person name="Sarmiento M."/>
            <person name="Schweighofer K."/>
            <person name="Seshadri R."/>
            <person name="Voytek M.A."/>
        </authorList>
    </citation>
    <scope>NUCLEOTIDE SEQUENCE [LARGE SCALE GENOMIC DNA]</scope>
    <source>
        <strain>YO3AOP1</strain>
    </source>
</reference>
<dbReference type="EMBL" id="CP001080">
    <property type="protein sequence ID" value="ACD66009.1"/>
    <property type="molecule type" value="Genomic_DNA"/>
</dbReference>
<dbReference type="RefSeq" id="WP_012459093.1">
    <property type="nucleotide sequence ID" value="NC_010730.1"/>
</dbReference>
<dbReference type="SMR" id="B2V7T6"/>
<dbReference type="STRING" id="436114.SYO3AOP1_0365"/>
<dbReference type="KEGG" id="sul:SYO3AOP1_0365"/>
<dbReference type="eggNOG" id="COG0806">
    <property type="taxonomic scope" value="Bacteria"/>
</dbReference>
<dbReference type="HOGENOM" id="CLU_077636_3_2_0"/>
<dbReference type="GO" id="GO:0005737">
    <property type="term" value="C:cytoplasm"/>
    <property type="evidence" value="ECO:0007669"/>
    <property type="project" value="UniProtKB-SubCell"/>
</dbReference>
<dbReference type="GO" id="GO:0005840">
    <property type="term" value="C:ribosome"/>
    <property type="evidence" value="ECO:0007669"/>
    <property type="project" value="InterPro"/>
</dbReference>
<dbReference type="GO" id="GO:0043022">
    <property type="term" value="F:ribosome binding"/>
    <property type="evidence" value="ECO:0007669"/>
    <property type="project" value="InterPro"/>
</dbReference>
<dbReference type="GO" id="GO:0042274">
    <property type="term" value="P:ribosomal small subunit biogenesis"/>
    <property type="evidence" value="ECO:0007669"/>
    <property type="project" value="UniProtKB-UniRule"/>
</dbReference>
<dbReference type="GO" id="GO:0006364">
    <property type="term" value="P:rRNA processing"/>
    <property type="evidence" value="ECO:0007669"/>
    <property type="project" value="UniProtKB-UniRule"/>
</dbReference>
<dbReference type="Gene3D" id="2.30.30.240">
    <property type="entry name" value="PRC-barrel domain"/>
    <property type="match status" value="1"/>
</dbReference>
<dbReference type="Gene3D" id="2.40.30.60">
    <property type="entry name" value="RimM"/>
    <property type="match status" value="1"/>
</dbReference>
<dbReference type="HAMAP" id="MF_00014">
    <property type="entry name" value="Ribosome_mat_RimM"/>
    <property type="match status" value="1"/>
</dbReference>
<dbReference type="InterPro" id="IPR011033">
    <property type="entry name" value="PRC_barrel-like_sf"/>
</dbReference>
<dbReference type="InterPro" id="IPR056792">
    <property type="entry name" value="PRC_RimM"/>
</dbReference>
<dbReference type="InterPro" id="IPR011961">
    <property type="entry name" value="RimM"/>
</dbReference>
<dbReference type="InterPro" id="IPR002676">
    <property type="entry name" value="RimM_N"/>
</dbReference>
<dbReference type="InterPro" id="IPR036976">
    <property type="entry name" value="RimM_N_sf"/>
</dbReference>
<dbReference type="InterPro" id="IPR009000">
    <property type="entry name" value="Transl_B-barrel_sf"/>
</dbReference>
<dbReference type="NCBIfam" id="TIGR02273">
    <property type="entry name" value="16S_RimM"/>
    <property type="match status" value="1"/>
</dbReference>
<dbReference type="PANTHER" id="PTHR33692">
    <property type="entry name" value="RIBOSOME MATURATION FACTOR RIMM"/>
    <property type="match status" value="1"/>
</dbReference>
<dbReference type="PANTHER" id="PTHR33692:SF1">
    <property type="entry name" value="RIBOSOME MATURATION FACTOR RIMM"/>
    <property type="match status" value="1"/>
</dbReference>
<dbReference type="Pfam" id="PF24986">
    <property type="entry name" value="PRC_RimM"/>
    <property type="match status" value="1"/>
</dbReference>
<dbReference type="Pfam" id="PF01782">
    <property type="entry name" value="RimM"/>
    <property type="match status" value="1"/>
</dbReference>
<dbReference type="SUPFAM" id="SSF50346">
    <property type="entry name" value="PRC-barrel domain"/>
    <property type="match status" value="1"/>
</dbReference>
<dbReference type="SUPFAM" id="SSF50447">
    <property type="entry name" value="Translation proteins"/>
    <property type="match status" value="1"/>
</dbReference>
<comment type="function">
    <text evidence="1">An accessory protein needed during the final step in the assembly of 30S ribosomal subunit, possibly for assembly of the head region. Essential for efficient processing of 16S rRNA. May be needed both before and after RbfA during the maturation of 16S rRNA. It has affinity for free ribosomal 30S subunits but not for 70S ribosomes.</text>
</comment>
<comment type="subunit">
    <text evidence="1">Binds ribosomal protein uS19.</text>
</comment>
<comment type="subcellular location">
    <subcellularLocation>
        <location evidence="1">Cytoplasm</location>
    </subcellularLocation>
</comment>
<comment type="domain">
    <text evidence="1">The PRC barrel domain binds ribosomal protein uS19.</text>
</comment>
<comment type="similarity">
    <text evidence="1">Belongs to the RimM family.</text>
</comment>
<evidence type="ECO:0000255" key="1">
    <source>
        <dbReference type="HAMAP-Rule" id="MF_00014"/>
    </source>
</evidence>
<accession>B2V7T6</accession>
<keyword id="KW-0143">Chaperone</keyword>
<keyword id="KW-0963">Cytoplasm</keyword>
<keyword id="KW-0690">Ribosome biogenesis</keyword>
<keyword id="KW-0698">rRNA processing</keyword>
<feature type="chain" id="PRO_0000351799" description="Ribosome maturation factor RimM">
    <location>
        <begin position="1"/>
        <end position="166"/>
    </location>
</feature>
<feature type="domain" description="PRC barrel" evidence="1">
    <location>
        <begin position="91"/>
        <end position="163"/>
    </location>
</feature>
<gene>
    <name evidence="1" type="primary">rimM</name>
    <name type="ordered locus">SYO3AOP1_0365</name>
</gene>
<name>RIMM_SULSY</name>